<feature type="chain" id="PRO_0000308545" description="Formin-like protein 19">
    <location>
        <begin position="1"/>
        <end position="464"/>
    </location>
</feature>
<feature type="domain" description="FH2" evidence="1">
    <location>
        <begin position="68"/>
        <end position="462"/>
    </location>
</feature>
<feature type="region of interest" description="Disordered" evidence="2">
    <location>
        <begin position="1"/>
        <end position="74"/>
    </location>
</feature>
<feature type="compositionally biased region" description="Pro residues" evidence="2">
    <location>
        <begin position="14"/>
        <end position="70"/>
    </location>
</feature>
<sequence>MSLVDISGAYSLVPLPPPPPPLMRRRAPLPPPPPPPLMRRRAPPPPPPPLMRRRAPPPPPPPPLPRPCSRPPKTKCSLKPLHWVKKTRALPGSLWDELQRRQECRDIEDEQILCAIELSVSEIETIFSLGAKPKPKPEPEKVPLIDLRRATNTEIRLMLLNIRLPDMIAAAMAMDESRLDDFDQIENLINLFPTKEDMKFLLTYTGDKGNCEQLFQYLQEVVKVPRVESKLRVFSFKIQFGTQITKLTKGLNAVNSACEEIRTSQKLKDIMENILCLGNILNQGTGRGRAVGFRLDSLLILSETRADNSKMTLMHYLCKVLASKASDLLDFHKDLESLESASKIQLKSLAEEIQAITKGLEKLKQELTASETDGPVSQVFRKLLKEFISNAETQVATVMALYYPARGNAEALAHYFGYHYPFEQVTATLLSFIRLFKKAHEENVKQAELEKKKAAKEAEMEKTK</sequence>
<accession>Q9FF14</accession>
<evidence type="ECO:0000255" key="1">
    <source>
        <dbReference type="PROSITE-ProRule" id="PRU00774"/>
    </source>
</evidence>
<evidence type="ECO:0000256" key="2">
    <source>
        <dbReference type="SAM" id="MobiDB-lite"/>
    </source>
</evidence>
<evidence type="ECO:0000305" key="3"/>
<comment type="similarity">
    <text evidence="3">Belongs to the formin-like family. Class-II subfamily.</text>
</comment>
<organism>
    <name type="scientific">Arabidopsis thaliana</name>
    <name type="common">Mouse-ear cress</name>
    <dbReference type="NCBI Taxonomy" id="3702"/>
    <lineage>
        <taxon>Eukaryota</taxon>
        <taxon>Viridiplantae</taxon>
        <taxon>Streptophyta</taxon>
        <taxon>Embryophyta</taxon>
        <taxon>Tracheophyta</taxon>
        <taxon>Spermatophyta</taxon>
        <taxon>Magnoliopsida</taxon>
        <taxon>eudicotyledons</taxon>
        <taxon>Gunneridae</taxon>
        <taxon>Pentapetalae</taxon>
        <taxon>rosids</taxon>
        <taxon>malvids</taxon>
        <taxon>Brassicales</taxon>
        <taxon>Brassicaceae</taxon>
        <taxon>Camelineae</taxon>
        <taxon>Arabidopsis</taxon>
    </lineage>
</organism>
<protein>
    <recommendedName>
        <fullName>Formin-like protein 19</fullName>
        <shortName>AtFH19</shortName>
    </recommendedName>
</protein>
<dbReference type="EMBL" id="AB005249">
    <property type="protein sequence ID" value="BAB09942.1"/>
    <property type="molecule type" value="Genomic_DNA"/>
</dbReference>
<dbReference type="EMBL" id="CP002688">
    <property type="protein sequence ID" value="AED91203.1"/>
    <property type="molecule type" value="Genomic_DNA"/>
</dbReference>
<dbReference type="EMBL" id="AK221526">
    <property type="protein sequence ID" value="BAD94830.1"/>
    <property type="molecule type" value="mRNA"/>
</dbReference>
<dbReference type="RefSeq" id="NP_196395.1">
    <property type="nucleotide sequence ID" value="NM_120860.3"/>
</dbReference>
<dbReference type="SMR" id="Q9FF14"/>
<dbReference type="STRING" id="3702.Q9FF14"/>
<dbReference type="PaxDb" id="3702-AT5G07780.1"/>
<dbReference type="EnsemblPlants" id="AT5G07780.1">
    <property type="protein sequence ID" value="AT5G07780.1"/>
    <property type="gene ID" value="AT5G07780"/>
</dbReference>
<dbReference type="GeneID" id="830671"/>
<dbReference type="Gramene" id="AT5G07780.1">
    <property type="protein sequence ID" value="AT5G07780.1"/>
    <property type="gene ID" value="AT5G07780"/>
</dbReference>
<dbReference type="KEGG" id="ath:AT5G07780"/>
<dbReference type="Araport" id="AT5G07780"/>
<dbReference type="TAIR" id="AT5G07780">
    <property type="gene designation" value="FH19"/>
</dbReference>
<dbReference type="eggNOG" id="KOG1922">
    <property type="taxonomic scope" value="Eukaryota"/>
</dbReference>
<dbReference type="HOGENOM" id="CLU_028505_0_0_1"/>
<dbReference type="InParanoid" id="Q9FF14"/>
<dbReference type="OMA" id="SNMTLMH"/>
<dbReference type="OrthoDB" id="1668162at2759"/>
<dbReference type="PhylomeDB" id="Q9FF14"/>
<dbReference type="PRO" id="PR:Q9FF14"/>
<dbReference type="Proteomes" id="UP000006548">
    <property type="component" value="Chromosome 5"/>
</dbReference>
<dbReference type="ExpressionAtlas" id="Q9FF14">
    <property type="expression patterns" value="baseline and differential"/>
</dbReference>
<dbReference type="GO" id="GO:0003779">
    <property type="term" value="F:actin binding"/>
    <property type="evidence" value="ECO:0000250"/>
    <property type="project" value="TAIR"/>
</dbReference>
<dbReference type="GO" id="GO:0045010">
    <property type="term" value="P:actin nucleation"/>
    <property type="evidence" value="ECO:0000314"/>
    <property type="project" value="TAIR"/>
</dbReference>
<dbReference type="GO" id="GO:0051016">
    <property type="term" value="P:barbed-end actin filament capping"/>
    <property type="evidence" value="ECO:0000314"/>
    <property type="project" value="TAIR"/>
</dbReference>
<dbReference type="Gene3D" id="1.20.58.2220">
    <property type="entry name" value="Formin, FH2 domain"/>
    <property type="match status" value="1"/>
</dbReference>
<dbReference type="InterPro" id="IPR015425">
    <property type="entry name" value="FH2_Formin"/>
</dbReference>
<dbReference type="InterPro" id="IPR042201">
    <property type="entry name" value="FH2_Formin_sf"/>
</dbReference>
<dbReference type="InterPro" id="IPR051144">
    <property type="entry name" value="Formin_homology_domain"/>
</dbReference>
<dbReference type="PANTHER" id="PTHR45733">
    <property type="entry name" value="FORMIN-J"/>
    <property type="match status" value="1"/>
</dbReference>
<dbReference type="PANTHER" id="PTHR45733:SF10">
    <property type="entry name" value="FORMIN-LIKE PROTEIN 15A-RELATED"/>
    <property type="match status" value="1"/>
</dbReference>
<dbReference type="Pfam" id="PF02181">
    <property type="entry name" value="FH2"/>
    <property type="match status" value="1"/>
</dbReference>
<dbReference type="SMART" id="SM00498">
    <property type="entry name" value="FH2"/>
    <property type="match status" value="1"/>
</dbReference>
<dbReference type="SUPFAM" id="SSF101447">
    <property type="entry name" value="Formin homology 2 domain (FH2 domain)"/>
    <property type="match status" value="1"/>
</dbReference>
<dbReference type="PROSITE" id="PS51444">
    <property type="entry name" value="FH2"/>
    <property type="match status" value="1"/>
</dbReference>
<proteinExistence type="evidence at transcript level"/>
<name>FH19_ARATH</name>
<gene>
    <name type="primary">FH19</name>
    <name type="ordered locus">At5g07780</name>
    <name type="ORF">MXM12.2</name>
</gene>
<reference key="1">
    <citation type="journal article" date="1997" name="DNA Res.">
        <title>Structural analysis of Arabidopsis thaliana chromosome 5. I. Sequence features of the 1.6 Mb regions covered by twenty physically assigned P1 clones.</title>
        <authorList>
            <person name="Sato S."/>
            <person name="Kotani H."/>
            <person name="Nakamura Y."/>
            <person name="Kaneko T."/>
            <person name="Asamizu E."/>
            <person name="Fukami M."/>
            <person name="Miyajima N."/>
            <person name="Tabata S."/>
        </authorList>
    </citation>
    <scope>NUCLEOTIDE SEQUENCE [LARGE SCALE GENOMIC DNA]</scope>
    <source>
        <strain>cv. Columbia</strain>
    </source>
</reference>
<reference key="2">
    <citation type="journal article" date="2017" name="Plant J.">
        <title>Araport11: a complete reannotation of the Arabidopsis thaliana reference genome.</title>
        <authorList>
            <person name="Cheng C.Y."/>
            <person name="Krishnakumar V."/>
            <person name="Chan A.P."/>
            <person name="Thibaud-Nissen F."/>
            <person name="Schobel S."/>
            <person name="Town C.D."/>
        </authorList>
    </citation>
    <scope>GENOME REANNOTATION</scope>
    <source>
        <strain>cv. Columbia</strain>
    </source>
</reference>
<reference key="3">
    <citation type="submission" date="2005-03" db="EMBL/GenBank/DDBJ databases">
        <title>Large-scale analysis of RIKEN Arabidopsis full-length (RAFL) cDNAs.</title>
        <authorList>
            <person name="Totoki Y."/>
            <person name="Seki M."/>
            <person name="Ishida J."/>
            <person name="Nakajima M."/>
            <person name="Enju A."/>
            <person name="Kamiya A."/>
            <person name="Narusaka M."/>
            <person name="Shin-i T."/>
            <person name="Nakagawa M."/>
            <person name="Sakamoto N."/>
            <person name="Oishi K."/>
            <person name="Kohara Y."/>
            <person name="Kobayashi M."/>
            <person name="Toyoda A."/>
            <person name="Sakaki Y."/>
            <person name="Sakurai T."/>
            <person name="Iida K."/>
            <person name="Akiyama K."/>
            <person name="Satou M."/>
            <person name="Toyoda T."/>
            <person name="Konagaya A."/>
            <person name="Carninci P."/>
            <person name="Kawai J."/>
            <person name="Hayashizaki Y."/>
            <person name="Shinozaki K."/>
        </authorList>
    </citation>
    <scope>NUCLEOTIDE SEQUENCE [LARGE SCALE MRNA]</scope>
    <source>
        <strain>cv. Columbia</strain>
    </source>
</reference>
<reference key="4">
    <citation type="journal article" date="2002" name="Trends Plant Sci.">
        <title>Formins: intermediates in signal-transduction cascades that affect cytoskeletal reorganization.</title>
        <authorList>
            <person name="Deeks M.J."/>
            <person name="Hussey P.J."/>
            <person name="Davies B."/>
        </authorList>
    </citation>
    <scope>GENE FAMILY ORGANIZATION</scope>
    <scope>NOMENCLATURE</scope>
</reference>
<reference key="5">
    <citation type="journal article" date="2004" name="BMC Genomics">
        <title>Formin homology 2 domains occur in multiple contexts in angiosperms.</title>
        <authorList>
            <person name="Cvrckova F."/>
            <person name="Novotny M."/>
            <person name="Pickova D."/>
            <person name="Zarsky V."/>
        </authorList>
    </citation>
    <scope>GENE FAMILY ORGANIZATION</scope>
    <scope>NOMENCLATURE</scope>
</reference>
<keyword id="KW-1185">Reference proteome</keyword>